<protein>
    <recommendedName>
        <fullName>Dynamin-related protein 12A</fullName>
    </recommendedName>
    <alternativeName>
        <fullName>Phragmoplastin</fullName>
    </alternativeName>
    <alternativeName>
        <fullName>Soybean dynamin-like protein 12A</fullName>
        <shortName>SDL12A</shortName>
    </alternativeName>
</protein>
<keyword id="KW-0131">Cell cycle</keyword>
<keyword id="KW-0132">Cell division</keyword>
<keyword id="KW-0963">Cytoplasm</keyword>
<keyword id="KW-0206">Cytoskeleton</keyword>
<keyword id="KW-0342">GTP-binding</keyword>
<keyword id="KW-0378">Hydrolase</keyword>
<keyword id="KW-0493">Microtubule</keyword>
<keyword id="KW-0505">Motor protein</keyword>
<keyword id="KW-0547">Nucleotide-binding</keyword>
<keyword id="KW-1185">Reference proteome</keyword>
<comment type="function">
    <text evidence="4 5 6">Microtubule-associated force-producing protein that is targeted to the forming cell plate during cytokinesis. May be involved in attaching Golgi-derived vesicles to microtubules which direct vesicles to the forming cell plate during cytokinesis. Possesses intrinsic GTPase activity in vitro.</text>
</comment>
<comment type="subunit">
    <text evidence="6">May homooligomerize and heterooligomerize. May interact with CALS1 and UGT1.</text>
</comment>
<comment type="interaction">
    <interactant intactId="EBI-1765815">
        <id>Q39821</id>
    </interactant>
    <interactant intactId="EBI-1765823">
        <id>Q9LR44</id>
        <label>UGT75B1</label>
    </interactant>
    <organismsDiffer>true</organismsDiffer>
    <experiments>2</experiments>
</comment>
<comment type="subcellular location">
    <subcellularLocation>
        <location evidence="6">Cytoplasm</location>
        <location evidence="6">Cytoskeleton</location>
        <location evidence="6">Phragmoplast</location>
    </subcellularLocation>
    <text evidence="6">Localized in the forming cell plate during cytokinesis (at protein level).</text>
</comment>
<comment type="tissue specificity">
    <text evidence="5">Expressed in seedling root tips and root elongation zones, young root nodules and young leaves.</text>
</comment>
<comment type="miscellaneous">
    <text>The term phragmoplastin refers to the location of the protein to the phragmoplast across the whole width of the newly formed cell plate, unlike phragmoplast microtubules which are concentrated on the periphery of the forming plate.</text>
</comment>
<comment type="similarity">
    <text evidence="3">Belongs to the TRAFAC class dynamin-like GTPase superfamily. Dynamin/Fzo/YdjA family.</text>
</comment>
<reference key="1">
    <citation type="journal article" date="1996" name="EMBO J.">
        <title>Phragmoplastin, a dynamin-like protein associated with cell plate formation in plants.</title>
        <authorList>
            <person name="Gu X."/>
            <person name="Verma D.P.S."/>
        </authorList>
    </citation>
    <scope>NUCLEOTIDE SEQUENCE [MRNA]</scope>
    <scope>FUNCTION</scope>
    <scope>TISSUE SPECIFICITY</scope>
    <source>
        <strain>cv. Prize</strain>
        <tissue>Root nodule</tissue>
    </source>
</reference>
<reference key="2">
    <citation type="journal article" date="1997" name="Plant Cell">
        <title>Dynamics of phragmoplastin in living cells during cell plate formation and uncoupling of cell elongation from the plane of cell division.</title>
        <authorList>
            <person name="Gu X."/>
            <person name="Verma D.P.S."/>
        </authorList>
    </citation>
    <scope>FUNCTION</scope>
    <scope>SUBUNIT</scope>
    <scope>SUBCELLULAR LOCATION</scope>
</reference>
<reference key="3">
    <citation type="journal article" date="2001" name="Plant Cell">
        <title>A cell plate-specific callose synthase and its interaction with phragmoplastin.</title>
        <authorList>
            <person name="Hong Z."/>
            <person name="Delauney A.J."/>
            <person name="Verma D.P.S."/>
        </authorList>
    </citation>
    <scope>INTERACTION WITH CALS1</scope>
</reference>
<reference key="4">
    <citation type="journal article" date="2001" name="Plant Cell">
        <title>A novel UDP-glucose transferase is part of the callose synthase complex and interacts with phragmoplastin at the forming cell plate.</title>
        <authorList>
            <person name="Hong Z."/>
            <person name="Zhang Z."/>
            <person name="Olson J.M."/>
            <person name="Verma D.P.S."/>
        </authorList>
    </citation>
    <scope>INTERACTION WITH UGT1</scope>
</reference>
<reference key="5">
    <citation type="journal article" date="2003" name="Plant Mol. Biol.">
        <title>Phragmoplastin dynamics: multiple forms, microtubule association and their roles in cell plate formation in plants.</title>
        <authorList>
            <person name="Hong Z."/>
            <person name="Geisler-Lee C.J."/>
            <person name="Zhang Z."/>
            <person name="Verma D.P.S."/>
        </authorList>
    </citation>
    <scope>FUNCTION</scope>
    <scope>MUTAGENESIS OF LYS-47</scope>
</reference>
<dbReference type="EMBL" id="U25547">
    <property type="protein sequence ID" value="AAB05992.1"/>
    <property type="molecule type" value="mRNA"/>
</dbReference>
<dbReference type="PIR" id="S63667">
    <property type="entry name" value="S63667"/>
</dbReference>
<dbReference type="RefSeq" id="NP_001235175.1">
    <property type="nucleotide sequence ID" value="NM_001248246.1"/>
</dbReference>
<dbReference type="SMR" id="Q39821"/>
<dbReference type="FunCoup" id="Q39821">
    <property type="interactions" value="4164"/>
</dbReference>
<dbReference type="IntAct" id="Q39821">
    <property type="interactions" value="2"/>
</dbReference>
<dbReference type="STRING" id="3847.Q39821"/>
<dbReference type="PaxDb" id="3847-GLYMA05G36840.1"/>
<dbReference type="GeneID" id="547855"/>
<dbReference type="KEGG" id="gmx:547855"/>
<dbReference type="eggNOG" id="KOG0446">
    <property type="taxonomic scope" value="Eukaryota"/>
</dbReference>
<dbReference type="InParanoid" id="Q39821"/>
<dbReference type="OrthoDB" id="5061070at2759"/>
<dbReference type="Proteomes" id="UP000008827">
    <property type="component" value="Unplaced"/>
</dbReference>
<dbReference type="GO" id="GO:0005737">
    <property type="term" value="C:cytoplasm"/>
    <property type="evidence" value="ECO:0000318"/>
    <property type="project" value="GO_Central"/>
</dbReference>
<dbReference type="GO" id="GO:0005874">
    <property type="term" value="C:microtubule"/>
    <property type="evidence" value="ECO:0000318"/>
    <property type="project" value="GO_Central"/>
</dbReference>
<dbReference type="GO" id="GO:0009524">
    <property type="term" value="C:phragmoplast"/>
    <property type="evidence" value="ECO:0007669"/>
    <property type="project" value="UniProtKB-SubCell"/>
</dbReference>
<dbReference type="GO" id="GO:0005886">
    <property type="term" value="C:plasma membrane"/>
    <property type="evidence" value="ECO:0000318"/>
    <property type="project" value="GO_Central"/>
</dbReference>
<dbReference type="GO" id="GO:0005525">
    <property type="term" value="F:GTP binding"/>
    <property type="evidence" value="ECO:0007669"/>
    <property type="project" value="UniProtKB-KW"/>
</dbReference>
<dbReference type="GO" id="GO:0003924">
    <property type="term" value="F:GTPase activity"/>
    <property type="evidence" value="ECO:0000318"/>
    <property type="project" value="GO_Central"/>
</dbReference>
<dbReference type="GO" id="GO:0008017">
    <property type="term" value="F:microtubule binding"/>
    <property type="evidence" value="ECO:0000318"/>
    <property type="project" value="GO_Central"/>
</dbReference>
<dbReference type="GO" id="GO:0051301">
    <property type="term" value="P:cell division"/>
    <property type="evidence" value="ECO:0007669"/>
    <property type="project" value="UniProtKB-KW"/>
</dbReference>
<dbReference type="GO" id="GO:0006898">
    <property type="term" value="P:receptor-mediated endocytosis"/>
    <property type="evidence" value="ECO:0000318"/>
    <property type="project" value="GO_Central"/>
</dbReference>
<dbReference type="CDD" id="cd08771">
    <property type="entry name" value="DLP_1"/>
    <property type="match status" value="1"/>
</dbReference>
<dbReference type="FunFam" id="3.40.50.300:FF:000228">
    <property type="entry name" value="dynamin-related protein 1E"/>
    <property type="match status" value="1"/>
</dbReference>
<dbReference type="FunFam" id="1.20.120.1240:FF:000010">
    <property type="entry name" value="Dynamin-related protein 5A"/>
    <property type="match status" value="1"/>
</dbReference>
<dbReference type="Gene3D" id="1.20.120.1240">
    <property type="entry name" value="Dynamin, middle domain"/>
    <property type="match status" value="1"/>
</dbReference>
<dbReference type="Gene3D" id="3.40.50.300">
    <property type="entry name" value="P-loop containing nucleotide triphosphate hydrolases"/>
    <property type="match status" value="1"/>
</dbReference>
<dbReference type="InterPro" id="IPR022812">
    <property type="entry name" value="Dynamin"/>
</dbReference>
<dbReference type="InterPro" id="IPR001401">
    <property type="entry name" value="Dynamin_GTPase"/>
</dbReference>
<dbReference type="InterPro" id="IPR019762">
    <property type="entry name" value="Dynamin_GTPase_CS"/>
</dbReference>
<dbReference type="InterPro" id="IPR045063">
    <property type="entry name" value="Dynamin_N"/>
</dbReference>
<dbReference type="InterPro" id="IPR000375">
    <property type="entry name" value="Dynamin_stalk"/>
</dbReference>
<dbReference type="InterPro" id="IPR030381">
    <property type="entry name" value="G_DYNAMIN_dom"/>
</dbReference>
<dbReference type="InterPro" id="IPR003130">
    <property type="entry name" value="GED"/>
</dbReference>
<dbReference type="InterPro" id="IPR020850">
    <property type="entry name" value="GED_dom"/>
</dbReference>
<dbReference type="InterPro" id="IPR027417">
    <property type="entry name" value="P-loop_NTPase"/>
</dbReference>
<dbReference type="PANTHER" id="PTHR11566">
    <property type="entry name" value="DYNAMIN"/>
    <property type="match status" value="1"/>
</dbReference>
<dbReference type="PANTHER" id="PTHR11566:SF207">
    <property type="entry name" value="DYNAMIN-RELATED PROTEIN 12A"/>
    <property type="match status" value="1"/>
</dbReference>
<dbReference type="Pfam" id="PF01031">
    <property type="entry name" value="Dynamin_M"/>
    <property type="match status" value="1"/>
</dbReference>
<dbReference type="Pfam" id="PF00350">
    <property type="entry name" value="Dynamin_N"/>
    <property type="match status" value="1"/>
</dbReference>
<dbReference type="Pfam" id="PF02212">
    <property type="entry name" value="GED"/>
    <property type="match status" value="1"/>
</dbReference>
<dbReference type="PRINTS" id="PR00195">
    <property type="entry name" value="DYNAMIN"/>
</dbReference>
<dbReference type="SMART" id="SM00053">
    <property type="entry name" value="DYNc"/>
    <property type="match status" value="1"/>
</dbReference>
<dbReference type="SMART" id="SM00302">
    <property type="entry name" value="GED"/>
    <property type="match status" value="1"/>
</dbReference>
<dbReference type="SUPFAM" id="SSF52540">
    <property type="entry name" value="P-loop containing nucleoside triphosphate hydrolases"/>
    <property type="match status" value="1"/>
</dbReference>
<dbReference type="PROSITE" id="PS00410">
    <property type="entry name" value="G_DYNAMIN_1"/>
    <property type="match status" value="1"/>
</dbReference>
<dbReference type="PROSITE" id="PS51718">
    <property type="entry name" value="G_DYNAMIN_2"/>
    <property type="match status" value="1"/>
</dbReference>
<dbReference type="PROSITE" id="PS51388">
    <property type="entry name" value="GED"/>
    <property type="match status" value="1"/>
</dbReference>
<proteinExistence type="evidence at protein level"/>
<sequence>MENLISLVNKIQRACTALGDHGENSALPTLWDSLPAIAVVGGQSSGKSSVLESVVGKDFLPRGSGIVTRRPLVLQLHKIDEGSREYAEFLHLPRKRFTDFVAVRKEIQDETDRETGRTKQISSVPIHLSIYSPNVVNLTLIDLPGLTKVAVEGQPDSIVKDIEDMVRSYIEKPNCIILAISPANQDLATSDAIKISREVDPTGDRTIGVLTKIDLMDKGTDAVDILEGRAYRLKFPWIGVVNRSQQDINKNVDMIAARRREREYFNSTPEYKHLANRMGSEHLAKMLSKHLETVIKSKIPGIQSLINKTIAELEAELTRLGKPVAADAGGKLYAIMEICRSFDQIFKDHLDGVRPGGDKIYNVFDNQLPAALKRLQFDKQLSMENIRKLITEADGYQPHLIAPEQGYRRLIESSLITIRGPAESAVDAVHSLLKDLVHKAMSETLDLKQYPGLRVEVGAASVDSLERMRDESKRATLQLVDMECGYLTVDFFRKLPQDVDKGGNPTHSICDRYNDSYLRRIGTTILSYVNMVCATLRHSIPKSIVYCQVREAKRSLLDHFFTELGKMEIKRLSSLLNEDPAIMERRSALAKRLELYRSAQAEIDAVAWSK</sequence>
<evidence type="ECO:0000250" key="1">
    <source>
        <dbReference type="UniProtKB" id="P42697"/>
    </source>
</evidence>
<evidence type="ECO:0000255" key="2">
    <source>
        <dbReference type="PROSITE-ProRule" id="PRU00720"/>
    </source>
</evidence>
<evidence type="ECO:0000255" key="3">
    <source>
        <dbReference type="PROSITE-ProRule" id="PRU01055"/>
    </source>
</evidence>
<evidence type="ECO:0000269" key="4">
    <source>
    </source>
</evidence>
<evidence type="ECO:0000269" key="5">
    <source>
    </source>
</evidence>
<evidence type="ECO:0000269" key="6">
    <source>
    </source>
</evidence>
<accession>Q39821</accession>
<organism>
    <name type="scientific">Glycine max</name>
    <name type="common">Soybean</name>
    <name type="synonym">Glycine hispida</name>
    <dbReference type="NCBI Taxonomy" id="3847"/>
    <lineage>
        <taxon>Eukaryota</taxon>
        <taxon>Viridiplantae</taxon>
        <taxon>Streptophyta</taxon>
        <taxon>Embryophyta</taxon>
        <taxon>Tracheophyta</taxon>
        <taxon>Spermatophyta</taxon>
        <taxon>Magnoliopsida</taxon>
        <taxon>eudicotyledons</taxon>
        <taxon>Gunneridae</taxon>
        <taxon>Pentapetalae</taxon>
        <taxon>rosids</taxon>
        <taxon>fabids</taxon>
        <taxon>Fabales</taxon>
        <taxon>Fabaceae</taxon>
        <taxon>Papilionoideae</taxon>
        <taxon>50 kb inversion clade</taxon>
        <taxon>NPAAA clade</taxon>
        <taxon>indigoferoid/millettioid clade</taxon>
        <taxon>Phaseoleae</taxon>
        <taxon>Glycine</taxon>
        <taxon>Glycine subgen. Soja</taxon>
    </lineage>
</organism>
<feature type="chain" id="PRO_0000334586" description="Dynamin-related protein 12A">
    <location>
        <begin position="1"/>
        <end position="610"/>
    </location>
</feature>
<feature type="domain" description="Dynamin-type G" evidence="3">
    <location>
        <begin position="31"/>
        <end position="300"/>
    </location>
</feature>
<feature type="domain" description="GED" evidence="2">
    <location>
        <begin position="518"/>
        <end position="610"/>
    </location>
</feature>
<feature type="region of interest" description="G1 motif" evidence="3">
    <location>
        <begin position="41"/>
        <end position="48"/>
    </location>
</feature>
<feature type="region of interest" description="G2 motif" evidence="3">
    <location>
        <begin position="67"/>
        <end position="69"/>
    </location>
</feature>
<feature type="region of interest" description="G3 motif" evidence="3">
    <location>
        <begin position="142"/>
        <end position="145"/>
    </location>
</feature>
<feature type="region of interest" description="G4 motif" evidence="3">
    <location>
        <begin position="211"/>
        <end position="214"/>
    </location>
</feature>
<feature type="region of interest" description="G5 motif" evidence="3">
    <location>
        <begin position="241"/>
        <end position="244"/>
    </location>
</feature>
<feature type="binding site" evidence="1">
    <location>
        <begin position="44"/>
        <end position="49"/>
    </location>
    <ligand>
        <name>GTP</name>
        <dbReference type="ChEBI" id="CHEBI:37565"/>
    </ligand>
</feature>
<feature type="binding site" evidence="1">
    <location>
        <begin position="212"/>
        <end position="217"/>
    </location>
    <ligand>
        <name>GTP</name>
        <dbReference type="ChEBI" id="CHEBI:37565"/>
    </ligand>
</feature>
<feature type="binding site" evidence="1">
    <location>
        <begin position="242"/>
        <end position="245"/>
    </location>
    <ligand>
        <name>GTP</name>
        <dbReference type="ChEBI" id="CHEBI:37565"/>
    </ligand>
</feature>
<feature type="mutagenesis site" description="Dominant negative. Loss of GTPase activity and reduced transport of vesicles to the cell plate." evidence="4">
    <original>K</original>
    <variation>M</variation>
    <location>
        <position position="47"/>
    </location>
</feature>
<name>SDLCA_SOYBN</name>